<feature type="chain" id="PRO_0000219078" description="Soluble NSF attachment protein homolog FPV033">
    <location>
        <begin position="1"/>
        <end position="287"/>
    </location>
</feature>
<accession>O90758</accession>
<keyword id="KW-0653">Protein transport</keyword>
<keyword id="KW-1185">Reference proteome</keyword>
<keyword id="KW-0813">Transport</keyword>
<reference key="1">
    <citation type="journal article" date="1998" name="J. Virol.">
        <title>Fowlpox virus encodes nonessential homologs of cellular alpha-SNAP, PC-1, and an orphan human homolog of a secreted nematode protein.</title>
        <authorList>
            <person name="Laidlaw S.M."/>
            <person name="Anwar M.A."/>
            <person name="Thomas W."/>
            <person name="Green P."/>
            <person name="Shaw K."/>
            <person name="Skinner M.A."/>
        </authorList>
    </citation>
    <scope>NUCLEOTIDE SEQUENCE [GENOMIC DNA]</scope>
    <source>
        <strain>FP-9 / Isolate HP-438</strain>
    </source>
</reference>
<reference key="2">
    <citation type="journal article" date="2000" name="J. Virol.">
        <title>The genome of fowlpox virus.</title>
        <authorList>
            <person name="Afonso C.L."/>
            <person name="Tulman E.R."/>
            <person name="Lu Z."/>
            <person name="Zsak L."/>
            <person name="Kutish G.F."/>
            <person name="Rock D.L."/>
        </authorList>
    </citation>
    <scope>NUCLEOTIDE SEQUENCE [LARGE SCALE GENOMIC DNA]</scope>
</reference>
<name>V033_FOWPN</name>
<dbReference type="EMBL" id="AJ006408">
    <property type="protein sequence ID" value="CAA07011.1"/>
    <property type="molecule type" value="Genomic_DNA"/>
</dbReference>
<dbReference type="EMBL" id="AF198100">
    <property type="protein sequence ID" value="AAF44377.1"/>
    <property type="molecule type" value="Genomic_DNA"/>
</dbReference>
<dbReference type="RefSeq" id="NP_038996.1">
    <property type="nucleotide sequence ID" value="NC_002188.1"/>
</dbReference>
<dbReference type="SMR" id="O90758"/>
<dbReference type="GeneID" id="1486752"/>
<dbReference type="KEGG" id="vg:1486752"/>
<dbReference type="Proteomes" id="UP000008597">
    <property type="component" value="Segment"/>
</dbReference>
<dbReference type="GO" id="GO:0005483">
    <property type="term" value="F:soluble NSF attachment protein activity"/>
    <property type="evidence" value="ECO:0007669"/>
    <property type="project" value="TreeGrafter"/>
</dbReference>
<dbReference type="GO" id="GO:0019905">
    <property type="term" value="F:syntaxin binding"/>
    <property type="evidence" value="ECO:0007669"/>
    <property type="project" value="TreeGrafter"/>
</dbReference>
<dbReference type="GO" id="GO:0015031">
    <property type="term" value="P:protein transport"/>
    <property type="evidence" value="ECO:0007669"/>
    <property type="project" value="UniProtKB-KW"/>
</dbReference>
<dbReference type="GO" id="GO:0010807">
    <property type="term" value="P:regulation of synaptic vesicle priming"/>
    <property type="evidence" value="ECO:0007669"/>
    <property type="project" value="TreeGrafter"/>
</dbReference>
<dbReference type="GO" id="GO:0035494">
    <property type="term" value="P:SNARE complex disassembly"/>
    <property type="evidence" value="ECO:0007669"/>
    <property type="project" value="TreeGrafter"/>
</dbReference>
<dbReference type="CDD" id="cd15832">
    <property type="entry name" value="SNAP"/>
    <property type="match status" value="1"/>
</dbReference>
<dbReference type="Gene3D" id="1.25.40.10">
    <property type="entry name" value="Tetratricopeptide repeat domain"/>
    <property type="match status" value="1"/>
</dbReference>
<dbReference type="InterPro" id="IPR000744">
    <property type="entry name" value="NSF_attach"/>
</dbReference>
<dbReference type="InterPro" id="IPR011990">
    <property type="entry name" value="TPR-like_helical_dom_sf"/>
</dbReference>
<dbReference type="PANTHER" id="PTHR13768:SF23">
    <property type="entry name" value="ALPHA-SOLUBLE NSF ATTACHMENT PROTEIN"/>
    <property type="match status" value="1"/>
</dbReference>
<dbReference type="PANTHER" id="PTHR13768">
    <property type="entry name" value="SOLUBLE NSF ATTACHMENT PROTEIN SNAP"/>
    <property type="match status" value="1"/>
</dbReference>
<dbReference type="Pfam" id="PF14938">
    <property type="entry name" value="SNAP"/>
    <property type="match status" value="1"/>
</dbReference>
<dbReference type="PRINTS" id="PR00448">
    <property type="entry name" value="NSFATTACHMNT"/>
</dbReference>
<dbReference type="SUPFAM" id="SSF48452">
    <property type="entry name" value="TPR-like"/>
    <property type="match status" value="1"/>
</dbReference>
<comment type="similarity">
    <text evidence="1">Belongs to the SNAP family.</text>
</comment>
<organism>
    <name type="scientific">Fowlpox virus (strain NVSL)</name>
    <name type="common">FPV</name>
    <dbReference type="NCBI Taxonomy" id="928301"/>
    <lineage>
        <taxon>Viruses</taxon>
        <taxon>Varidnaviria</taxon>
        <taxon>Bamfordvirae</taxon>
        <taxon>Nucleocytoviricota</taxon>
        <taxon>Pokkesviricetes</taxon>
        <taxon>Chitovirales</taxon>
        <taxon>Poxviridae</taxon>
        <taxon>Chordopoxvirinae</taxon>
        <taxon>Avipoxvirus</taxon>
        <taxon>Fowlpox virus</taxon>
    </lineage>
</organism>
<proteinExistence type="inferred from homology"/>
<evidence type="ECO:0000305" key="1"/>
<sequence length="287" mass="33438">MEQEAYRLISEANRRLKDVGFLFSWKFLRNVNNVKEVGNLLIRSAILFKAVKNWELAGYSFLKAAVLQSQESDFVLDTAINFVNASNMYRKIDPKKSIECLLQAIEVYKSINNFTTAAKHQMTVAEIYESCIMDLEKACMHYEYATEYYREEGSIKSANDCMIKVADCFTRMKQFDKAASVYEQIGIICMRLPILKHRIKDQFLKAILCHFCIGDKDMRLIVGYYTELYAQFIDYREYTLIMKVVESCDTCNLDILVDALREYGSVTRLDYILTIMLLEIKKNIQTQ</sequence>
<protein>
    <recommendedName>
        <fullName>Soluble NSF attachment protein homolog FPV033</fullName>
    </recommendedName>
</protein>
<gene>
    <name type="primary">SNAP</name>
    <name type="ordered locus">FPV033</name>
</gene>
<organismHost>
    <name type="scientific">Vertebrata</name>
    <dbReference type="NCBI Taxonomy" id="7742"/>
</organismHost>